<reference key="1">
    <citation type="journal article" date="1992" name="Virology">
        <title>Channel catfish virus: a new type of herpesvirus.</title>
        <authorList>
            <person name="Davison A.J."/>
        </authorList>
    </citation>
    <scope>NUCLEOTIDE SEQUENCE [LARGE SCALE GENOMIC DNA]</scope>
</reference>
<organismHost>
    <name type="scientific">Ictaluridae</name>
    <name type="common">bullhead catfishes</name>
    <dbReference type="NCBI Taxonomy" id="7996"/>
</organismHost>
<gene>
    <name type="primary">ORF12</name>
</gene>
<name>VG12_ICHVA</name>
<protein>
    <recommendedName>
        <fullName>Putative zinc-binding protein ORF12</fullName>
    </recommendedName>
</protein>
<accession>Q00165</accession>
<sequence length="299" mass="33108">MTSPREEITVRLSCGHPLRVPDGEFCFGDGAYCCDCDERAVFFAPDHLTTVLSKVAPEGLDALTEKSWKLAKAIVTCGTCGDVLYQPVIHERCGHVCCRFCFRDKCAECGLMRTAVRPLPDLERLIQESLFGHDTRGLEYSDKFTAELMGPQGKEVILLYDGALGNVFVDLVTGISAVIADRAEKPIDLVDIVLNPDWSPVPCTIPYRLFRLLVKANAEMGVHDWSDLVTLGAWNILVEYGAVPGLDRSRLLEFLRYLVIPGFDGAETFPALTETFLSILAECTWVGDSRCGYRDACSR</sequence>
<organism>
    <name type="scientific">Ictalurid herpesvirus 1 (strain Auburn)</name>
    <name type="common">IcHV-1</name>
    <name type="synonym">Channel catfish herpesvirus</name>
    <dbReference type="NCBI Taxonomy" id="766178"/>
    <lineage>
        <taxon>Viruses</taxon>
        <taxon>Duplodnaviria</taxon>
        <taxon>Heunggongvirae</taxon>
        <taxon>Peploviricota</taxon>
        <taxon>Herviviricetes</taxon>
        <taxon>Herpesvirales</taxon>
        <taxon>Alloherpesviridae</taxon>
        <taxon>Ictavirus</taxon>
        <taxon>Ictavirus ictaluridallo1</taxon>
        <taxon>Ictalurid herpesvirus 1</taxon>
    </lineage>
</organism>
<proteinExistence type="predicted"/>
<feature type="chain" id="PRO_0000222098" description="Putative zinc-binding protein ORF12">
    <location>
        <begin position="1"/>
        <end position="299"/>
    </location>
</feature>
<dbReference type="EMBL" id="M75136">
    <property type="protein sequence ID" value="AAA88193.1"/>
    <property type="molecule type" value="Genomic_DNA"/>
</dbReference>
<dbReference type="EMBL" id="M75136">
    <property type="protein sequence ID" value="AAA88115.1"/>
    <property type="molecule type" value="Genomic_DNA"/>
</dbReference>
<dbReference type="PIR" id="D36787">
    <property type="entry name" value="ZBBEI3"/>
</dbReference>
<dbReference type="KEGG" id="vg:1488363"/>
<dbReference type="KEGG" id="vg:1488420"/>
<dbReference type="Proteomes" id="UP000007643">
    <property type="component" value="Segment"/>
</dbReference>
<dbReference type="GO" id="GO:0008270">
    <property type="term" value="F:zinc ion binding"/>
    <property type="evidence" value="ECO:0007669"/>
    <property type="project" value="UniProtKB-KW"/>
</dbReference>
<dbReference type="Gene3D" id="3.30.40.10">
    <property type="entry name" value="Zinc/RING finger domain, C3HC4 (zinc finger)"/>
    <property type="match status" value="1"/>
</dbReference>
<dbReference type="InterPro" id="IPR013083">
    <property type="entry name" value="Znf_RING/FYVE/PHD"/>
</dbReference>
<dbReference type="SUPFAM" id="SSF57850">
    <property type="entry name" value="RING/U-box"/>
    <property type="match status" value="1"/>
</dbReference>
<keyword id="KW-0479">Metal-binding</keyword>
<keyword id="KW-1185">Reference proteome</keyword>
<keyword id="KW-0862">Zinc</keyword>
<keyword id="KW-0863">Zinc-finger</keyword>